<feature type="chain" id="PRO_0000302556" description="ATP-dependent dethiobiotin synthetase BioD">
    <location>
        <begin position="1"/>
        <end position="224"/>
    </location>
</feature>
<feature type="active site" evidence="1">
    <location>
        <position position="39"/>
    </location>
</feature>
<feature type="binding site" evidence="1">
    <location>
        <position position="18"/>
    </location>
    <ligand>
        <name>Mg(2+)</name>
        <dbReference type="ChEBI" id="CHEBI:18420"/>
    </ligand>
</feature>
<feature type="binding site" evidence="1">
    <location>
        <position position="43"/>
    </location>
    <ligand>
        <name>substrate</name>
    </ligand>
</feature>
<feature type="binding site" evidence="1">
    <location>
        <position position="56"/>
    </location>
    <ligand>
        <name>ATP</name>
        <dbReference type="ChEBI" id="CHEBI:30616"/>
    </ligand>
</feature>
<feature type="binding site" evidence="1">
    <location>
        <position position="56"/>
    </location>
    <ligand>
        <name>Mg(2+)</name>
        <dbReference type="ChEBI" id="CHEBI:18420"/>
    </ligand>
</feature>
<feature type="binding site" evidence="1">
    <location>
        <begin position="117"/>
        <end position="120"/>
    </location>
    <ligand>
        <name>ATP</name>
        <dbReference type="ChEBI" id="CHEBI:30616"/>
    </ligand>
</feature>
<feature type="binding site" evidence="1">
    <location>
        <position position="117"/>
    </location>
    <ligand>
        <name>Mg(2+)</name>
        <dbReference type="ChEBI" id="CHEBI:18420"/>
    </ligand>
</feature>
<feature type="binding site" evidence="1">
    <location>
        <begin position="177"/>
        <end position="178"/>
    </location>
    <ligand>
        <name>ATP</name>
        <dbReference type="ChEBI" id="CHEBI:30616"/>
    </ligand>
</feature>
<reference key="1">
    <citation type="journal article" date="2005" name="Jpn. Agric. Res. Q.">
        <title>Genome sequence of Xanthomonas oryzae pv. oryzae suggests contribution of large numbers of effector genes and insertion sequences to its race diversity.</title>
        <authorList>
            <person name="Ochiai H."/>
            <person name="Inoue Y."/>
            <person name="Takeya M."/>
            <person name="Sasaki A."/>
            <person name="Kaku H."/>
        </authorList>
    </citation>
    <scope>NUCLEOTIDE SEQUENCE [LARGE SCALE GENOMIC DNA]</scope>
    <source>
        <strain>MAFF 311018</strain>
    </source>
</reference>
<proteinExistence type="inferred from homology"/>
<sequence>MQPPAFYVTGTDTGIGKTMGSTALLHALRARGHTAVGMKPVASGCERTPQGWRNEDALALQAASNPQPAYATLNPYALPAPLAPELAAADVGVTLSLEPITQAFAQLRAQAEVVVVEGVGGWAAPLSATLDQADLVRALQLPVVLVVGVRLGCINHARLTAAAIAADGLQCIGWIANEVDPQMERVEENIGMLRQRLAMPCWGRIPWRPDAEAAAQAQGLQLPR</sequence>
<evidence type="ECO:0000255" key="1">
    <source>
        <dbReference type="HAMAP-Rule" id="MF_00336"/>
    </source>
</evidence>
<name>BIOD_XANOM</name>
<accession>Q2P7M5</accession>
<organism>
    <name type="scientific">Xanthomonas oryzae pv. oryzae (strain MAFF 311018)</name>
    <dbReference type="NCBI Taxonomy" id="342109"/>
    <lineage>
        <taxon>Bacteria</taxon>
        <taxon>Pseudomonadati</taxon>
        <taxon>Pseudomonadota</taxon>
        <taxon>Gammaproteobacteria</taxon>
        <taxon>Lysobacterales</taxon>
        <taxon>Lysobacteraceae</taxon>
        <taxon>Xanthomonas</taxon>
    </lineage>
</organism>
<dbReference type="EC" id="6.3.3.3" evidence="1"/>
<dbReference type="EMBL" id="AP008229">
    <property type="protein sequence ID" value="BAE67452.1"/>
    <property type="molecule type" value="Genomic_DNA"/>
</dbReference>
<dbReference type="RefSeq" id="WP_011407597.1">
    <property type="nucleotide sequence ID" value="NC_007705.1"/>
</dbReference>
<dbReference type="SMR" id="Q2P7M5"/>
<dbReference type="KEGG" id="xom:XOO0697"/>
<dbReference type="HOGENOM" id="CLU_072551_0_0_6"/>
<dbReference type="UniPathway" id="UPA00078">
    <property type="reaction ID" value="UER00161"/>
</dbReference>
<dbReference type="GO" id="GO:0005829">
    <property type="term" value="C:cytosol"/>
    <property type="evidence" value="ECO:0007669"/>
    <property type="project" value="TreeGrafter"/>
</dbReference>
<dbReference type="GO" id="GO:0005524">
    <property type="term" value="F:ATP binding"/>
    <property type="evidence" value="ECO:0007669"/>
    <property type="project" value="UniProtKB-UniRule"/>
</dbReference>
<dbReference type="GO" id="GO:0004141">
    <property type="term" value="F:dethiobiotin synthase activity"/>
    <property type="evidence" value="ECO:0007669"/>
    <property type="project" value="UniProtKB-UniRule"/>
</dbReference>
<dbReference type="GO" id="GO:0000287">
    <property type="term" value="F:magnesium ion binding"/>
    <property type="evidence" value="ECO:0007669"/>
    <property type="project" value="UniProtKB-UniRule"/>
</dbReference>
<dbReference type="GO" id="GO:0009102">
    <property type="term" value="P:biotin biosynthetic process"/>
    <property type="evidence" value="ECO:0007669"/>
    <property type="project" value="UniProtKB-UniRule"/>
</dbReference>
<dbReference type="CDD" id="cd03109">
    <property type="entry name" value="DTBS"/>
    <property type="match status" value="1"/>
</dbReference>
<dbReference type="FunFam" id="3.40.50.300:FF:000292">
    <property type="entry name" value="ATP-dependent dethiobiotin synthetase BioD"/>
    <property type="match status" value="1"/>
</dbReference>
<dbReference type="Gene3D" id="3.40.50.300">
    <property type="entry name" value="P-loop containing nucleotide triphosphate hydrolases"/>
    <property type="match status" value="1"/>
</dbReference>
<dbReference type="HAMAP" id="MF_00336">
    <property type="entry name" value="BioD"/>
    <property type="match status" value="1"/>
</dbReference>
<dbReference type="InterPro" id="IPR004472">
    <property type="entry name" value="DTB_synth_BioD"/>
</dbReference>
<dbReference type="InterPro" id="IPR027417">
    <property type="entry name" value="P-loop_NTPase"/>
</dbReference>
<dbReference type="NCBIfam" id="TIGR00347">
    <property type="entry name" value="bioD"/>
    <property type="match status" value="1"/>
</dbReference>
<dbReference type="PANTHER" id="PTHR43210">
    <property type="entry name" value="DETHIOBIOTIN SYNTHETASE"/>
    <property type="match status" value="1"/>
</dbReference>
<dbReference type="PANTHER" id="PTHR43210:SF5">
    <property type="entry name" value="DETHIOBIOTIN SYNTHETASE"/>
    <property type="match status" value="1"/>
</dbReference>
<dbReference type="Pfam" id="PF13500">
    <property type="entry name" value="AAA_26"/>
    <property type="match status" value="1"/>
</dbReference>
<dbReference type="PIRSF" id="PIRSF006755">
    <property type="entry name" value="DTB_synth"/>
    <property type="match status" value="1"/>
</dbReference>
<dbReference type="SUPFAM" id="SSF52540">
    <property type="entry name" value="P-loop containing nucleoside triphosphate hydrolases"/>
    <property type="match status" value="1"/>
</dbReference>
<comment type="function">
    <text evidence="1">Catalyzes a mechanistically unusual reaction, the ATP-dependent insertion of CO2 between the N7 and N8 nitrogen atoms of 7,8-diaminopelargonic acid (DAPA, also called 7,8-diammoniononanoate) to form a ureido ring.</text>
</comment>
<comment type="catalytic activity">
    <reaction evidence="1">
        <text>(7R,8S)-7,8-diammoniononanoate + CO2 + ATP = (4R,5S)-dethiobiotin + ADP + phosphate + 3 H(+)</text>
        <dbReference type="Rhea" id="RHEA:15805"/>
        <dbReference type="ChEBI" id="CHEBI:15378"/>
        <dbReference type="ChEBI" id="CHEBI:16526"/>
        <dbReference type="ChEBI" id="CHEBI:30616"/>
        <dbReference type="ChEBI" id="CHEBI:43474"/>
        <dbReference type="ChEBI" id="CHEBI:149469"/>
        <dbReference type="ChEBI" id="CHEBI:149473"/>
        <dbReference type="ChEBI" id="CHEBI:456216"/>
        <dbReference type="EC" id="6.3.3.3"/>
    </reaction>
</comment>
<comment type="cofactor">
    <cofactor evidence="1">
        <name>Mg(2+)</name>
        <dbReference type="ChEBI" id="CHEBI:18420"/>
    </cofactor>
</comment>
<comment type="pathway">
    <text evidence="1">Cofactor biosynthesis; biotin biosynthesis; biotin from 7,8-diaminononanoate: step 1/2.</text>
</comment>
<comment type="subunit">
    <text evidence="1">Homodimer.</text>
</comment>
<comment type="subcellular location">
    <subcellularLocation>
        <location evidence="1">Cytoplasm</location>
    </subcellularLocation>
</comment>
<comment type="similarity">
    <text evidence="1">Belongs to the dethiobiotin synthetase family.</text>
</comment>
<gene>
    <name evidence="1" type="primary">bioD</name>
    <name type="ordered locus">XOO0697</name>
</gene>
<protein>
    <recommendedName>
        <fullName evidence="1">ATP-dependent dethiobiotin synthetase BioD</fullName>
        <ecNumber evidence="1">6.3.3.3</ecNumber>
    </recommendedName>
    <alternativeName>
        <fullName evidence="1">DTB synthetase</fullName>
        <shortName evidence="1">DTBS</shortName>
    </alternativeName>
    <alternativeName>
        <fullName evidence="1">Dethiobiotin synthase</fullName>
    </alternativeName>
</protein>
<keyword id="KW-0067">ATP-binding</keyword>
<keyword id="KW-0093">Biotin biosynthesis</keyword>
<keyword id="KW-0963">Cytoplasm</keyword>
<keyword id="KW-0436">Ligase</keyword>
<keyword id="KW-0460">Magnesium</keyword>
<keyword id="KW-0479">Metal-binding</keyword>
<keyword id="KW-0547">Nucleotide-binding</keyword>